<name>MSHD_MYCTO</name>
<reference key="1">
    <citation type="journal article" date="2002" name="J. Bacteriol.">
        <title>Whole-genome comparison of Mycobacterium tuberculosis clinical and laboratory strains.</title>
        <authorList>
            <person name="Fleischmann R.D."/>
            <person name="Alland D."/>
            <person name="Eisen J.A."/>
            <person name="Carpenter L."/>
            <person name="White O."/>
            <person name="Peterson J.D."/>
            <person name="DeBoy R.T."/>
            <person name="Dodson R.J."/>
            <person name="Gwinn M.L."/>
            <person name="Haft D.H."/>
            <person name="Hickey E.K."/>
            <person name="Kolonay J.F."/>
            <person name="Nelson W.C."/>
            <person name="Umayam L.A."/>
            <person name="Ermolaeva M.D."/>
            <person name="Salzberg S.L."/>
            <person name="Delcher A."/>
            <person name="Utterback T.R."/>
            <person name="Weidman J.F."/>
            <person name="Khouri H.M."/>
            <person name="Gill J."/>
            <person name="Mikula A."/>
            <person name="Bishai W."/>
            <person name="Jacobs W.R. Jr."/>
            <person name="Venter J.C."/>
            <person name="Fraser C.M."/>
        </authorList>
    </citation>
    <scope>NUCLEOTIDE SEQUENCE [LARGE SCALE GENOMIC DNA]</scope>
    <source>
        <strain>CDC 1551 / Oshkosh</strain>
    </source>
</reference>
<accession>P9WJM6</accession>
<accession>L0T7T7</accession>
<accession>O53831</accession>
<accession>Q7D982</accession>
<organism>
    <name type="scientific">Mycobacterium tuberculosis (strain CDC 1551 / Oshkosh)</name>
    <dbReference type="NCBI Taxonomy" id="83331"/>
    <lineage>
        <taxon>Bacteria</taxon>
        <taxon>Bacillati</taxon>
        <taxon>Actinomycetota</taxon>
        <taxon>Actinomycetes</taxon>
        <taxon>Mycobacteriales</taxon>
        <taxon>Mycobacteriaceae</taxon>
        <taxon>Mycobacterium</taxon>
        <taxon>Mycobacterium tuberculosis complex</taxon>
    </lineage>
</organism>
<protein>
    <recommendedName>
        <fullName>Mycothiol acetyltransferase</fullName>
        <shortName>MSH acetyltransferase</shortName>
        <ecNumber>2.3.1.189</ecNumber>
    </recommendedName>
    <alternativeName>
        <fullName>Mycothiol synthase</fullName>
    </alternativeName>
</protein>
<evidence type="ECO:0000250" key="1"/>
<evidence type="ECO:0000305" key="2"/>
<feature type="chain" id="PRO_0000427803" description="Mycothiol acetyltransferase">
    <location>
        <begin position="1"/>
        <end position="315"/>
    </location>
</feature>
<feature type="domain" description="N-acetyltransferase 1">
    <location>
        <begin position="4"/>
        <end position="141"/>
    </location>
</feature>
<feature type="domain" description="N-acetyltransferase 2">
    <location>
        <begin position="152"/>
        <end position="315"/>
    </location>
</feature>
<feature type="binding site" evidence="1">
    <location>
        <position position="36"/>
    </location>
    <ligand>
        <name>1D-myo-inositol 2-(L-cysteinylamino)-2-deoxy-alpha-D-glucopyranoside</name>
        <dbReference type="ChEBI" id="CHEBI:58887"/>
    </ligand>
</feature>
<feature type="binding site" evidence="1">
    <location>
        <begin position="80"/>
        <end position="82"/>
    </location>
    <ligand>
        <name>acetyl-CoA</name>
        <dbReference type="ChEBI" id="CHEBI:57288"/>
        <label>1</label>
    </ligand>
</feature>
<feature type="binding site" evidence="1">
    <location>
        <begin position="88"/>
        <end position="93"/>
    </location>
    <ligand>
        <name>acetyl-CoA</name>
        <dbReference type="ChEBI" id="CHEBI:57288"/>
        <label>1</label>
    </ligand>
</feature>
<feature type="binding site" evidence="1">
    <location>
        <position position="179"/>
    </location>
    <ligand>
        <name>1D-myo-inositol 2-(L-cysteinylamino)-2-deoxy-alpha-D-glucopyranoside</name>
        <dbReference type="ChEBI" id="CHEBI:58887"/>
    </ligand>
</feature>
<feature type="binding site" evidence="1">
    <location>
        <position position="224"/>
    </location>
    <ligand>
        <name>1D-myo-inositol 2-(L-cysteinylamino)-2-deoxy-alpha-D-glucopyranoside</name>
        <dbReference type="ChEBI" id="CHEBI:58887"/>
    </ligand>
</feature>
<feature type="binding site" evidence="1">
    <location>
        <position position="234"/>
    </location>
    <ligand>
        <name>1D-myo-inositol 2-(L-cysteinylamino)-2-deoxy-alpha-D-glucopyranoside</name>
        <dbReference type="ChEBI" id="CHEBI:58887"/>
    </ligand>
</feature>
<feature type="binding site" evidence="1">
    <location>
        <begin position="238"/>
        <end position="240"/>
    </location>
    <ligand>
        <name>acetyl-CoA</name>
        <dbReference type="ChEBI" id="CHEBI:57288"/>
        <label>2</label>
    </ligand>
</feature>
<feature type="binding site" evidence="1">
    <location>
        <begin position="245"/>
        <end position="251"/>
    </location>
    <ligand>
        <name>acetyl-CoA</name>
        <dbReference type="ChEBI" id="CHEBI:57288"/>
        <label>2</label>
    </ligand>
</feature>
<feature type="binding site" evidence="1">
    <location>
        <position position="282"/>
    </location>
    <ligand>
        <name>1D-myo-inositol 2-(L-cysteinylamino)-2-deoxy-alpha-D-glucopyranoside</name>
        <dbReference type="ChEBI" id="CHEBI:58887"/>
    </ligand>
</feature>
<feature type="binding site" evidence="1">
    <location>
        <begin position="287"/>
        <end position="292"/>
    </location>
    <ligand>
        <name>acetyl-CoA</name>
        <dbReference type="ChEBI" id="CHEBI:57288"/>
        <label>2</label>
    </ligand>
</feature>
<comment type="function">
    <text evidence="1">Catalyzes the transfer of acetyl from acetyl-CoA to desacetylmycothiol (Cys-GlcN-Ins) to form mycothiol.</text>
</comment>
<comment type="catalytic activity">
    <reaction>
        <text>1D-myo-inositol 2-(L-cysteinylamino)-2-deoxy-alpha-D-glucopyranoside + acetyl-CoA = mycothiol + CoA + H(+)</text>
        <dbReference type="Rhea" id="RHEA:26172"/>
        <dbReference type="ChEBI" id="CHEBI:15378"/>
        <dbReference type="ChEBI" id="CHEBI:16768"/>
        <dbReference type="ChEBI" id="CHEBI:57287"/>
        <dbReference type="ChEBI" id="CHEBI:57288"/>
        <dbReference type="ChEBI" id="CHEBI:58887"/>
        <dbReference type="EC" id="2.3.1.189"/>
    </reaction>
</comment>
<comment type="subunit">
    <text evidence="1">Monomer.</text>
</comment>
<comment type="similarity">
    <text evidence="2">Belongs to the acetyltransferase family. MshD subfamily.</text>
</comment>
<gene>
    <name type="primary">mshD</name>
    <name type="ordered locus">MT0841</name>
</gene>
<dbReference type="EC" id="2.3.1.189"/>
<dbReference type="EMBL" id="AE000516">
    <property type="protein sequence ID" value="AAK45083.1"/>
    <property type="molecule type" value="Genomic_DNA"/>
</dbReference>
<dbReference type="PIR" id="C70810">
    <property type="entry name" value="C70810"/>
</dbReference>
<dbReference type="RefSeq" id="WP_003404307.1">
    <property type="nucleotide sequence ID" value="NZ_KK341227.1"/>
</dbReference>
<dbReference type="SMR" id="P9WJM6"/>
<dbReference type="KEGG" id="mtc:MT0841"/>
<dbReference type="PATRIC" id="fig|83331.31.peg.900"/>
<dbReference type="HOGENOM" id="CLU_068014_0_0_11"/>
<dbReference type="Proteomes" id="UP000001020">
    <property type="component" value="Chromosome"/>
</dbReference>
<dbReference type="GO" id="GO:0035447">
    <property type="term" value="F:mycothiol synthase activity"/>
    <property type="evidence" value="ECO:0007669"/>
    <property type="project" value="UniProtKB-UniRule"/>
</dbReference>
<dbReference type="GO" id="GO:0008999">
    <property type="term" value="F:protein-N-terminal-alanine acetyltransferase activity"/>
    <property type="evidence" value="ECO:0007669"/>
    <property type="project" value="TreeGrafter"/>
</dbReference>
<dbReference type="GO" id="GO:0010125">
    <property type="term" value="P:mycothiol biosynthetic process"/>
    <property type="evidence" value="ECO:0007669"/>
    <property type="project" value="UniProtKB-UniRule"/>
</dbReference>
<dbReference type="CDD" id="cd04301">
    <property type="entry name" value="NAT_SF"/>
    <property type="match status" value="2"/>
</dbReference>
<dbReference type="FunFam" id="3.40.630.30:FF:000089">
    <property type="entry name" value="Mycothiol acetyltransferase"/>
    <property type="match status" value="1"/>
</dbReference>
<dbReference type="Gene3D" id="3.40.630.30">
    <property type="match status" value="1"/>
</dbReference>
<dbReference type="HAMAP" id="MF_01698">
    <property type="entry name" value="MshD"/>
    <property type="match status" value="1"/>
</dbReference>
<dbReference type="InterPro" id="IPR016181">
    <property type="entry name" value="Acyl_CoA_acyltransferase"/>
</dbReference>
<dbReference type="InterPro" id="IPR000182">
    <property type="entry name" value="GNAT_dom"/>
</dbReference>
<dbReference type="InterPro" id="IPR050276">
    <property type="entry name" value="MshD_Acetyltransferase"/>
</dbReference>
<dbReference type="InterPro" id="IPR017813">
    <property type="entry name" value="Mycothiol_AcTrfase"/>
</dbReference>
<dbReference type="NCBIfam" id="TIGR03448">
    <property type="entry name" value="mycothiol_MshD"/>
    <property type="match status" value="1"/>
</dbReference>
<dbReference type="PANTHER" id="PTHR43617">
    <property type="entry name" value="L-AMINO ACID N-ACETYLTRANSFERASE"/>
    <property type="match status" value="1"/>
</dbReference>
<dbReference type="PANTHER" id="PTHR43617:SF31">
    <property type="entry name" value="MYCOTHIOL ACETYLTRANSFERASE"/>
    <property type="match status" value="1"/>
</dbReference>
<dbReference type="Pfam" id="PF00583">
    <property type="entry name" value="Acetyltransf_1"/>
    <property type="match status" value="2"/>
</dbReference>
<dbReference type="PIRSF" id="PIRSF021524">
    <property type="entry name" value="MSH_acetyltransferase"/>
    <property type="match status" value="1"/>
</dbReference>
<dbReference type="SUPFAM" id="SSF55729">
    <property type="entry name" value="Acyl-CoA N-acyltransferases (Nat)"/>
    <property type="match status" value="1"/>
</dbReference>
<dbReference type="PROSITE" id="PS51186">
    <property type="entry name" value="GNAT"/>
    <property type="match status" value="2"/>
</dbReference>
<keyword id="KW-0012">Acyltransferase</keyword>
<keyword id="KW-1185">Reference proteome</keyword>
<keyword id="KW-0677">Repeat</keyword>
<keyword id="KW-0808">Transferase</keyword>
<proteinExistence type="inferred from homology"/>
<sequence length="315" mass="33599">MTALDWRSALTADEQRSVRALVTATTAVDGVAPVGEQVLRELGQQRTEHLLVAGSRPGGPIIGYLNLSPPRGAGGAMAELVVHPQSRRRGIGTAMARAALAKTAGRNQFWAHGTLDPARATASALGLVGVRELIQMRRPLRDIPEPTIPDGVVIRTYAGTSDDAELLRVNNAAFAGHPEQGGWTAVQLAERRGEAWFDPDGLILAFGDSPRERPGRLLGFHWTKVHPDHPGLGEVYVLGVDPAAQRRGLGQMLTSIGIVSLARRLGGRKTLDPAVEPAVLLYVESDNVAAVRTYQSLGFTTYSVDTAYALAGTDN</sequence>